<organism>
    <name type="scientific">Photobacterium profundum (strain SS9)</name>
    <dbReference type="NCBI Taxonomy" id="298386"/>
    <lineage>
        <taxon>Bacteria</taxon>
        <taxon>Pseudomonadati</taxon>
        <taxon>Pseudomonadota</taxon>
        <taxon>Gammaproteobacteria</taxon>
        <taxon>Vibrionales</taxon>
        <taxon>Vibrionaceae</taxon>
        <taxon>Photobacterium</taxon>
    </lineage>
</organism>
<feature type="chain" id="PRO_0000135812" description="Histidinol dehydrogenase">
    <location>
        <begin position="1"/>
        <end position="443"/>
    </location>
</feature>
<feature type="active site" description="Proton acceptor" evidence="1">
    <location>
        <position position="323"/>
    </location>
</feature>
<feature type="active site" description="Proton acceptor" evidence="1">
    <location>
        <position position="324"/>
    </location>
</feature>
<feature type="binding site" evidence="1">
    <location>
        <position position="127"/>
    </location>
    <ligand>
        <name>NAD(+)</name>
        <dbReference type="ChEBI" id="CHEBI:57540"/>
    </ligand>
</feature>
<feature type="binding site" evidence="1">
    <location>
        <position position="185"/>
    </location>
    <ligand>
        <name>NAD(+)</name>
        <dbReference type="ChEBI" id="CHEBI:57540"/>
    </ligand>
</feature>
<feature type="binding site" evidence="1">
    <location>
        <position position="208"/>
    </location>
    <ligand>
        <name>NAD(+)</name>
        <dbReference type="ChEBI" id="CHEBI:57540"/>
    </ligand>
</feature>
<feature type="binding site" evidence="1">
    <location>
        <position position="234"/>
    </location>
    <ligand>
        <name>substrate</name>
    </ligand>
</feature>
<feature type="binding site" evidence="1">
    <location>
        <position position="256"/>
    </location>
    <ligand>
        <name>substrate</name>
    </ligand>
</feature>
<feature type="binding site" evidence="1">
    <location>
        <position position="256"/>
    </location>
    <ligand>
        <name>Zn(2+)</name>
        <dbReference type="ChEBI" id="CHEBI:29105"/>
    </ligand>
</feature>
<feature type="binding site" evidence="1">
    <location>
        <position position="259"/>
    </location>
    <ligand>
        <name>substrate</name>
    </ligand>
</feature>
<feature type="binding site" evidence="1">
    <location>
        <position position="259"/>
    </location>
    <ligand>
        <name>Zn(2+)</name>
        <dbReference type="ChEBI" id="CHEBI:29105"/>
    </ligand>
</feature>
<feature type="binding site" evidence="1">
    <location>
        <position position="324"/>
    </location>
    <ligand>
        <name>substrate</name>
    </ligand>
</feature>
<feature type="binding site" evidence="1">
    <location>
        <position position="357"/>
    </location>
    <ligand>
        <name>substrate</name>
    </ligand>
</feature>
<feature type="binding site" evidence="1">
    <location>
        <position position="357"/>
    </location>
    <ligand>
        <name>Zn(2+)</name>
        <dbReference type="ChEBI" id="CHEBI:29105"/>
    </ligand>
</feature>
<feature type="binding site" evidence="1">
    <location>
        <position position="411"/>
    </location>
    <ligand>
        <name>substrate</name>
    </ligand>
</feature>
<feature type="binding site" evidence="1">
    <location>
        <position position="416"/>
    </location>
    <ligand>
        <name>substrate</name>
    </ligand>
</feature>
<feature type="binding site" evidence="1">
    <location>
        <position position="416"/>
    </location>
    <ligand>
        <name>Zn(2+)</name>
        <dbReference type="ChEBI" id="CHEBI:29105"/>
    </ligand>
</feature>
<protein>
    <recommendedName>
        <fullName evidence="1">Histidinol dehydrogenase</fullName>
        <shortName evidence="1">HDH</shortName>
        <ecNumber evidence="1">1.1.1.23</ecNumber>
    </recommendedName>
</protein>
<sequence>MKTVVWQSLSENQQESLLQRPAITEGANITAIVADVVADVRQRGDEALLELTEKFDRVRPDSIRVSEQEVTAATSRLSDNMKQALQQAYQNIATFHKAQKTKPLRVETQPGVVCEQVTRPINSVGLYIPGGSAPLPSTVLMLGVPAQIAGCRQVVLCSPPPIADEILYVAQLCGITEIYNIGGSQAIAAMAYGTKSVARVDKIFGPGNAFVTEAKRQVSNDFRGAAIDMPAGPSEVLVIADKTADPDFIAADLLSQAEHGPDSQVILLTPEPSIADRVADAIQLQLKVLPRADIARQALGSSILIVTETISQCISISNHYGPEHLIVQTREPRELVPLLDNAGSIFLGDWSPESVGDYASGTNHVLPTYGYTRTYSSLGLADFSKRMTVQELTADGLKILAPTVVTMAEAEGLDAHKRAVTIRIEKLQQQEILKAQQVEEKEA</sequence>
<proteinExistence type="inferred from homology"/>
<gene>
    <name evidence="1" type="primary">hisD</name>
    <name type="ordered locus">PBPRA1091</name>
</gene>
<reference key="1">
    <citation type="journal article" date="2005" name="Science">
        <title>Life at depth: Photobacterium profundum genome sequence and expression analysis.</title>
        <authorList>
            <person name="Vezzi A."/>
            <person name="Campanaro S."/>
            <person name="D'Angelo M."/>
            <person name="Simonato F."/>
            <person name="Vitulo N."/>
            <person name="Lauro F.M."/>
            <person name="Cestaro A."/>
            <person name="Malacrida G."/>
            <person name="Simionati B."/>
            <person name="Cannata N."/>
            <person name="Romualdi C."/>
            <person name="Bartlett D.H."/>
            <person name="Valle G."/>
        </authorList>
    </citation>
    <scope>NUCLEOTIDE SEQUENCE [LARGE SCALE GENOMIC DNA]</scope>
    <source>
        <strain>ATCC BAA-1253 / SS9</strain>
    </source>
</reference>
<evidence type="ECO:0000255" key="1">
    <source>
        <dbReference type="HAMAP-Rule" id="MF_01024"/>
    </source>
</evidence>
<dbReference type="EC" id="1.1.1.23" evidence="1"/>
<dbReference type="EMBL" id="CR378666">
    <property type="protein sequence ID" value="CAG19502.1"/>
    <property type="molecule type" value="Genomic_DNA"/>
</dbReference>
<dbReference type="RefSeq" id="WP_011217835.1">
    <property type="nucleotide sequence ID" value="NC_006370.1"/>
</dbReference>
<dbReference type="SMR" id="P62459"/>
<dbReference type="STRING" id="298386.PBPRA1091"/>
<dbReference type="KEGG" id="ppr:PBPRA1091"/>
<dbReference type="eggNOG" id="COG0141">
    <property type="taxonomic scope" value="Bacteria"/>
</dbReference>
<dbReference type="HOGENOM" id="CLU_006732_3_0_6"/>
<dbReference type="UniPathway" id="UPA00031">
    <property type="reaction ID" value="UER00014"/>
</dbReference>
<dbReference type="Proteomes" id="UP000000593">
    <property type="component" value="Chromosome 1"/>
</dbReference>
<dbReference type="GO" id="GO:0005829">
    <property type="term" value="C:cytosol"/>
    <property type="evidence" value="ECO:0007669"/>
    <property type="project" value="TreeGrafter"/>
</dbReference>
<dbReference type="GO" id="GO:0004399">
    <property type="term" value="F:histidinol dehydrogenase activity"/>
    <property type="evidence" value="ECO:0007669"/>
    <property type="project" value="UniProtKB-UniRule"/>
</dbReference>
<dbReference type="GO" id="GO:0051287">
    <property type="term" value="F:NAD binding"/>
    <property type="evidence" value="ECO:0007669"/>
    <property type="project" value="InterPro"/>
</dbReference>
<dbReference type="GO" id="GO:0008270">
    <property type="term" value="F:zinc ion binding"/>
    <property type="evidence" value="ECO:0007669"/>
    <property type="project" value="UniProtKB-UniRule"/>
</dbReference>
<dbReference type="GO" id="GO:0000105">
    <property type="term" value="P:L-histidine biosynthetic process"/>
    <property type="evidence" value="ECO:0007669"/>
    <property type="project" value="UniProtKB-UniRule"/>
</dbReference>
<dbReference type="CDD" id="cd06572">
    <property type="entry name" value="Histidinol_dh"/>
    <property type="match status" value="1"/>
</dbReference>
<dbReference type="FunFam" id="3.40.50.1980:FF:000001">
    <property type="entry name" value="Histidinol dehydrogenase"/>
    <property type="match status" value="1"/>
</dbReference>
<dbReference type="FunFam" id="1.20.5.1300:FF:000002">
    <property type="entry name" value="Histidinol dehydrogenase, chloroplastic"/>
    <property type="match status" value="1"/>
</dbReference>
<dbReference type="Gene3D" id="1.20.5.1300">
    <property type="match status" value="1"/>
</dbReference>
<dbReference type="Gene3D" id="3.40.50.1980">
    <property type="entry name" value="Nitrogenase molybdenum iron protein domain"/>
    <property type="match status" value="2"/>
</dbReference>
<dbReference type="HAMAP" id="MF_01024">
    <property type="entry name" value="HisD"/>
    <property type="match status" value="1"/>
</dbReference>
<dbReference type="InterPro" id="IPR016161">
    <property type="entry name" value="Ald_DH/histidinol_DH"/>
</dbReference>
<dbReference type="InterPro" id="IPR001692">
    <property type="entry name" value="Histidinol_DH_CS"/>
</dbReference>
<dbReference type="InterPro" id="IPR022695">
    <property type="entry name" value="Histidinol_DH_monofunct"/>
</dbReference>
<dbReference type="InterPro" id="IPR012131">
    <property type="entry name" value="Hstdl_DH"/>
</dbReference>
<dbReference type="NCBIfam" id="TIGR00069">
    <property type="entry name" value="hisD"/>
    <property type="match status" value="1"/>
</dbReference>
<dbReference type="PANTHER" id="PTHR21256:SF2">
    <property type="entry name" value="HISTIDINE BIOSYNTHESIS TRIFUNCTIONAL PROTEIN"/>
    <property type="match status" value="1"/>
</dbReference>
<dbReference type="PANTHER" id="PTHR21256">
    <property type="entry name" value="HISTIDINOL DEHYDROGENASE HDH"/>
    <property type="match status" value="1"/>
</dbReference>
<dbReference type="Pfam" id="PF00815">
    <property type="entry name" value="Histidinol_dh"/>
    <property type="match status" value="1"/>
</dbReference>
<dbReference type="PIRSF" id="PIRSF000099">
    <property type="entry name" value="Histidinol_dh"/>
    <property type="match status" value="1"/>
</dbReference>
<dbReference type="PRINTS" id="PR00083">
    <property type="entry name" value="HOLDHDRGNASE"/>
</dbReference>
<dbReference type="SUPFAM" id="SSF53720">
    <property type="entry name" value="ALDH-like"/>
    <property type="match status" value="1"/>
</dbReference>
<dbReference type="PROSITE" id="PS00611">
    <property type="entry name" value="HISOL_DEHYDROGENASE"/>
    <property type="match status" value="1"/>
</dbReference>
<comment type="function">
    <text evidence="1">Catalyzes the sequential NAD-dependent oxidations of L-histidinol to L-histidinaldehyde and then to L-histidine.</text>
</comment>
<comment type="catalytic activity">
    <reaction evidence="1">
        <text>L-histidinol + 2 NAD(+) + H2O = L-histidine + 2 NADH + 3 H(+)</text>
        <dbReference type="Rhea" id="RHEA:20641"/>
        <dbReference type="ChEBI" id="CHEBI:15377"/>
        <dbReference type="ChEBI" id="CHEBI:15378"/>
        <dbReference type="ChEBI" id="CHEBI:57540"/>
        <dbReference type="ChEBI" id="CHEBI:57595"/>
        <dbReference type="ChEBI" id="CHEBI:57699"/>
        <dbReference type="ChEBI" id="CHEBI:57945"/>
        <dbReference type="EC" id="1.1.1.23"/>
    </reaction>
</comment>
<comment type="cofactor">
    <cofactor evidence="1">
        <name>Zn(2+)</name>
        <dbReference type="ChEBI" id="CHEBI:29105"/>
    </cofactor>
    <text evidence="1">Binds 1 zinc ion per subunit.</text>
</comment>
<comment type="pathway">
    <text evidence="1">Amino-acid biosynthesis; L-histidine biosynthesis; L-histidine from 5-phospho-alpha-D-ribose 1-diphosphate: step 9/9.</text>
</comment>
<comment type="similarity">
    <text evidence="1">Belongs to the histidinol dehydrogenase family.</text>
</comment>
<name>HISX_PHOPR</name>
<accession>P62459</accession>
<keyword id="KW-0028">Amino-acid biosynthesis</keyword>
<keyword id="KW-0368">Histidine biosynthesis</keyword>
<keyword id="KW-0479">Metal-binding</keyword>
<keyword id="KW-0520">NAD</keyword>
<keyword id="KW-0560">Oxidoreductase</keyword>
<keyword id="KW-1185">Reference proteome</keyword>
<keyword id="KW-0862">Zinc</keyword>